<dbReference type="EC" id="3.4.24.-"/>
<dbReference type="EMBL" id="ABSU01000027">
    <property type="protein sequence ID" value="EFE30707.1"/>
    <property type="molecule type" value="Genomic_DNA"/>
</dbReference>
<dbReference type="RefSeq" id="XP_003011347.1">
    <property type="nucleotide sequence ID" value="XM_003011301.1"/>
</dbReference>
<dbReference type="SMR" id="D4B1S5"/>
<dbReference type="MEROPS" id="M36.001"/>
<dbReference type="GlyCosmos" id="D4B1S5">
    <property type="glycosylation" value="4 sites, No reported glycans"/>
</dbReference>
<dbReference type="GeneID" id="9524248"/>
<dbReference type="KEGG" id="abe:ARB_02406"/>
<dbReference type="eggNOG" id="ENOG502QTDC">
    <property type="taxonomic scope" value="Eukaryota"/>
</dbReference>
<dbReference type="HOGENOM" id="CLU_012703_3_0_1"/>
<dbReference type="OMA" id="YIWTRAN"/>
<dbReference type="OrthoDB" id="3227768at2759"/>
<dbReference type="Proteomes" id="UP000008866">
    <property type="component" value="Unassembled WGS sequence"/>
</dbReference>
<dbReference type="GO" id="GO:0005576">
    <property type="term" value="C:extracellular region"/>
    <property type="evidence" value="ECO:0007669"/>
    <property type="project" value="UniProtKB-SubCell"/>
</dbReference>
<dbReference type="GO" id="GO:0004222">
    <property type="term" value="F:metalloendopeptidase activity"/>
    <property type="evidence" value="ECO:0007669"/>
    <property type="project" value="InterPro"/>
</dbReference>
<dbReference type="GO" id="GO:0008270">
    <property type="term" value="F:zinc ion binding"/>
    <property type="evidence" value="ECO:0007669"/>
    <property type="project" value="InterPro"/>
</dbReference>
<dbReference type="GO" id="GO:0006508">
    <property type="term" value="P:proteolysis"/>
    <property type="evidence" value="ECO:0007669"/>
    <property type="project" value="UniProtKB-KW"/>
</dbReference>
<dbReference type="CDD" id="cd09596">
    <property type="entry name" value="M36"/>
    <property type="match status" value="1"/>
</dbReference>
<dbReference type="Gene3D" id="3.10.170.10">
    <property type="match status" value="1"/>
</dbReference>
<dbReference type="Gene3D" id="1.10.390.10">
    <property type="entry name" value="Neutral Protease Domain 2"/>
    <property type="match status" value="1"/>
</dbReference>
<dbReference type="InterPro" id="IPR011096">
    <property type="entry name" value="FTP_domain"/>
</dbReference>
<dbReference type="InterPro" id="IPR050371">
    <property type="entry name" value="Fungal_virulence_M36"/>
</dbReference>
<dbReference type="InterPro" id="IPR001842">
    <property type="entry name" value="Peptidase_M36"/>
</dbReference>
<dbReference type="InterPro" id="IPR027268">
    <property type="entry name" value="Peptidase_M4/M1_CTD_sf"/>
</dbReference>
<dbReference type="PANTHER" id="PTHR33478">
    <property type="entry name" value="EXTRACELLULAR METALLOPROTEINASE MEP"/>
    <property type="match status" value="1"/>
</dbReference>
<dbReference type="PANTHER" id="PTHR33478:SF1">
    <property type="entry name" value="EXTRACELLULAR METALLOPROTEINASE MEP"/>
    <property type="match status" value="1"/>
</dbReference>
<dbReference type="Pfam" id="PF07504">
    <property type="entry name" value="FTP"/>
    <property type="match status" value="1"/>
</dbReference>
<dbReference type="Pfam" id="PF02128">
    <property type="entry name" value="Peptidase_M36"/>
    <property type="match status" value="1"/>
</dbReference>
<dbReference type="PRINTS" id="PR00999">
    <property type="entry name" value="FUNGALYSIN"/>
</dbReference>
<dbReference type="SUPFAM" id="SSF55486">
    <property type="entry name" value="Metalloproteases ('zincins'), catalytic domain"/>
    <property type="match status" value="1"/>
</dbReference>
<dbReference type="PROSITE" id="PS00142">
    <property type="entry name" value="ZINC_PROTEASE"/>
    <property type="match status" value="1"/>
</dbReference>
<organism>
    <name type="scientific">Arthroderma benhamiae (strain ATCC MYA-4681 / CBS 112371)</name>
    <name type="common">Trichophyton mentagrophytes</name>
    <dbReference type="NCBI Taxonomy" id="663331"/>
    <lineage>
        <taxon>Eukaryota</taxon>
        <taxon>Fungi</taxon>
        <taxon>Dikarya</taxon>
        <taxon>Ascomycota</taxon>
        <taxon>Pezizomycotina</taxon>
        <taxon>Eurotiomycetes</taxon>
        <taxon>Eurotiomycetidae</taxon>
        <taxon>Onygenales</taxon>
        <taxon>Arthrodermataceae</taxon>
        <taxon>Trichophyton</taxon>
    </lineage>
</organism>
<name>MEP1_ARTBC</name>
<gene>
    <name type="primary">MEP1</name>
    <name type="ORF">ARB_02406</name>
</gene>
<reference key="1">
    <citation type="journal article" date="2011" name="Genome Biol.">
        <title>Comparative and functional genomics provide insights into the pathogenicity of dermatophytic fungi.</title>
        <authorList>
            <person name="Burmester A."/>
            <person name="Shelest E."/>
            <person name="Gloeckner G."/>
            <person name="Heddergott C."/>
            <person name="Schindler S."/>
            <person name="Staib P."/>
            <person name="Heidel A."/>
            <person name="Felder M."/>
            <person name="Petzold A."/>
            <person name="Szafranski K."/>
            <person name="Feuermann M."/>
            <person name="Pedruzzi I."/>
            <person name="Priebe S."/>
            <person name="Groth M."/>
            <person name="Winkler R."/>
            <person name="Li W."/>
            <person name="Kniemeyer O."/>
            <person name="Schroeckh V."/>
            <person name="Hertweck C."/>
            <person name="Hube B."/>
            <person name="White T.C."/>
            <person name="Platzer M."/>
            <person name="Guthke R."/>
            <person name="Heitman J."/>
            <person name="Woestemeyer J."/>
            <person name="Zipfel P.F."/>
            <person name="Monod M."/>
            <person name="Brakhage A.A."/>
        </authorList>
    </citation>
    <scope>NUCLEOTIDE SEQUENCE [LARGE SCALE GENOMIC DNA]</scope>
    <scope>IDENTIFICATION BY MASS SPECTROMETRY</scope>
    <scope>SUBCELLULAR LOCATION</scope>
    <source>
        <strain>ATCC MYA-4681 / CBS 112371</strain>
    </source>
</reference>
<keyword id="KW-0325">Glycoprotein</keyword>
<keyword id="KW-0378">Hydrolase</keyword>
<keyword id="KW-0479">Metal-binding</keyword>
<keyword id="KW-0482">Metalloprotease</keyword>
<keyword id="KW-0645">Protease</keyword>
<keyword id="KW-1185">Reference proteome</keyword>
<keyword id="KW-0964">Secreted</keyword>
<keyword id="KW-0732">Signal</keyword>
<keyword id="KW-0843">Virulence</keyword>
<keyword id="KW-0862">Zinc</keyword>
<keyword id="KW-0865">Zymogen</keyword>
<sequence>MHGLLLAAGLLSLPLHVLAHPQPSTSTSLAGRAGAVDLNEFRVAHRSSYTSHDEMKKLPSIASFRQGTYLEVATELVKQTMPNMEFRLVDDHYVGDSGIGHVRFRQTMHGIDIDNSDFNVNVGKDGKVLSHGNSFYTGPAPSSNPMVKRDFIDPMQALHGVRKALNLPIKADGAHVEDMSEHKVMFKGTSGALSDPTAKLCYMAKEDGSLALTWRVETDIGDNWLLSYMDAKESSKVHNVVDYVAHATFQVYKWGLADPTEGKREILTNPWNLKTSPLTWLSDGQNNYTATRGNNAIAQYNPDGGSDYENNYRPSPKNLKFEYPYSPDMNPPKTYIDASVTELFYTSNVCHDLYYMLGFNEKAGNFQVNNRGQGGKGNDFVILNAQDGSGTNNANFATPPDGQPGRMRAYIWTRANPPRDASFEAGTIIHEYTHGLSNRLCGGPANSRCLNAIESGGMGEGWGDFYATAVRLKPNDTRKTNYVKGGWVNNSPKGVRMYPYSTDMNVNPLVYTSNNKLNEVHAIGTVWCTMLYEVLWNLIDKHGKNDGPVPIFENGVPNDGKYLAMKIVMDGMAIQPCNPNFVQARDAILDADMNLTKGANKCEIWKGFAKRGLGVGAKFDPKNRTGSTQVPNECK</sequence>
<comment type="function">
    <text evidence="1">Secreted metalloproteinase probably acting as a virulence factor.</text>
</comment>
<comment type="cofactor">
    <cofactor evidence="1">
        <name>Zn(2+)</name>
        <dbReference type="ChEBI" id="CHEBI:29105"/>
    </cofactor>
    <text evidence="1">Binds 1 zinc ion per subunit.</text>
</comment>
<comment type="subcellular location">
    <subcellularLocation>
        <location evidence="4">Secreted</location>
    </subcellularLocation>
</comment>
<comment type="similarity">
    <text evidence="5">Belongs to the peptidase M36 family.</text>
</comment>
<feature type="signal peptide" evidence="2">
    <location>
        <begin position="1"/>
        <end position="19"/>
    </location>
</feature>
<feature type="propeptide" id="PRO_0000397722" evidence="1">
    <location>
        <begin position="20"/>
        <end position="246"/>
    </location>
</feature>
<feature type="chain" id="PRO_0000397723" description="Probable extracellular metalloproteinase 1">
    <location>
        <begin position="247"/>
        <end position="635"/>
    </location>
</feature>
<feature type="active site" evidence="3">
    <location>
        <position position="431"/>
    </location>
</feature>
<feature type="binding site" evidence="3">
    <location>
        <position position="430"/>
    </location>
    <ligand>
        <name>Zn(2+)</name>
        <dbReference type="ChEBI" id="CHEBI:29105"/>
        <note>catalytic</note>
    </ligand>
</feature>
<feature type="binding site" evidence="3">
    <location>
        <position position="434"/>
    </location>
    <ligand>
        <name>Zn(2+)</name>
        <dbReference type="ChEBI" id="CHEBI:29105"/>
        <note>catalytic</note>
    </ligand>
</feature>
<feature type="glycosylation site" description="N-linked (GlcNAc...) asparagine" evidence="2">
    <location>
        <position position="287"/>
    </location>
</feature>
<feature type="glycosylation site" description="N-linked (GlcNAc...) asparagine" evidence="2">
    <location>
        <position position="475"/>
    </location>
</feature>
<feature type="glycosylation site" description="N-linked (GlcNAc...) asparagine" evidence="2">
    <location>
        <position position="594"/>
    </location>
</feature>
<feature type="glycosylation site" description="N-linked (GlcNAc...) asparagine" evidence="2">
    <location>
        <position position="623"/>
    </location>
</feature>
<accession>D4B1S5</accession>
<proteinExistence type="evidence at protein level"/>
<protein>
    <recommendedName>
        <fullName>Probable extracellular metalloproteinase 1</fullName>
        <ecNumber>3.4.24.-</ecNumber>
    </recommendedName>
    <alternativeName>
        <fullName>Fungalysin MEP1</fullName>
    </alternativeName>
</protein>
<evidence type="ECO:0000250" key="1"/>
<evidence type="ECO:0000255" key="2"/>
<evidence type="ECO:0000255" key="3">
    <source>
        <dbReference type="PROSITE-ProRule" id="PRU10095"/>
    </source>
</evidence>
<evidence type="ECO:0000269" key="4">
    <source>
    </source>
</evidence>
<evidence type="ECO:0000305" key="5"/>